<evidence type="ECO:0000250" key="1"/>
<evidence type="ECO:0000255" key="2"/>
<evidence type="ECO:0000269" key="3">
    <source>
    </source>
</evidence>
<evidence type="ECO:0000269" key="4">
    <source>
    </source>
</evidence>
<evidence type="ECO:0000305" key="5"/>
<dbReference type="EMBL" id="AY848980">
    <property type="protein sequence ID" value="AAX50201.1"/>
    <property type="molecule type" value="mRNA"/>
</dbReference>
<dbReference type="SMR" id="Q58T80"/>
<dbReference type="GO" id="GO:0005576">
    <property type="term" value="C:extracellular region"/>
    <property type="evidence" value="ECO:0007669"/>
    <property type="project" value="UniProtKB-SubCell"/>
</dbReference>
<dbReference type="GO" id="GO:0042742">
    <property type="term" value="P:defense response to bacterium"/>
    <property type="evidence" value="ECO:0007669"/>
    <property type="project" value="UniProtKB-KW"/>
</dbReference>
<dbReference type="GO" id="GO:0050832">
    <property type="term" value="P:defense response to fungus"/>
    <property type="evidence" value="ECO:0007669"/>
    <property type="project" value="UniProtKB-KW"/>
</dbReference>
<dbReference type="GO" id="GO:0031640">
    <property type="term" value="P:killing of cells of another organism"/>
    <property type="evidence" value="ECO:0007669"/>
    <property type="project" value="UniProtKB-KW"/>
</dbReference>
<dbReference type="InterPro" id="IPR007962">
    <property type="entry name" value="Bombinin"/>
</dbReference>
<dbReference type="Pfam" id="PF05298">
    <property type="entry name" value="Bombinin"/>
    <property type="match status" value="1"/>
</dbReference>
<proteinExistence type="evidence at protein level"/>
<name>M3H92_BOMMX</name>
<protein>
    <recommendedName>
        <fullName>Maximins 3/H9 type 2</fullName>
    </recommendedName>
    <component>
        <recommendedName>
            <fullName>Maximin-3</fullName>
        </recommendedName>
    </component>
    <component>
        <recommendedName>
            <fullName>Maximin-H9</fullName>
        </recommendedName>
    </component>
</protein>
<feature type="signal peptide" evidence="2">
    <location>
        <begin position="1"/>
        <end position="18"/>
    </location>
</feature>
<feature type="propeptide" id="PRO_0000003136" evidence="3">
    <location>
        <begin position="19"/>
        <end position="43"/>
    </location>
</feature>
<feature type="peptide" id="PRO_0000003137" description="Maximin-3">
    <location>
        <begin position="44"/>
        <end position="70"/>
    </location>
</feature>
<feature type="propeptide" id="PRO_0000003138" evidence="1">
    <location>
        <begin position="74"/>
        <end position="123"/>
    </location>
</feature>
<feature type="peptide" id="PRO_0000003139" description="Maximin-H9">
    <location>
        <begin position="124"/>
        <end position="143"/>
    </location>
</feature>
<feature type="modified residue" description="Isoleucine amide" evidence="4">
    <location>
        <position position="143"/>
    </location>
</feature>
<keyword id="KW-0027">Amidation</keyword>
<keyword id="KW-0878">Amphibian defense peptide</keyword>
<keyword id="KW-0044">Antibiotic</keyword>
<keyword id="KW-0929">Antimicrobial</keyword>
<keyword id="KW-0165">Cleavage on pair of basic residues</keyword>
<keyword id="KW-0204">Cytolysis</keyword>
<keyword id="KW-0903">Direct protein sequencing</keyword>
<keyword id="KW-0295">Fungicide</keyword>
<keyword id="KW-0354">Hemolysis</keyword>
<keyword id="KW-0964">Secreted</keyword>
<keyword id="KW-0732">Signal</keyword>
<accession>Q58T80</accession>
<sequence>MNFKYIVAVSFLIASAYARSVQNDEQSLSQRDVLEEESLREIRGIGGKILSGLKTALKGAAKELASTYLHRKRTAEEHEVMKRLEAVMRDLDSLDYPEEASERETRGFNQDEIANLFTKKEKRILGPVLGLVSNALGGLIKKIG</sequence>
<organism>
    <name type="scientific">Bombina maxima</name>
    <name type="common">Giant fire-bellied toad</name>
    <name type="synonym">Chinese red belly toad</name>
    <dbReference type="NCBI Taxonomy" id="161274"/>
    <lineage>
        <taxon>Eukaryota</taxon>
        <taxon>Metazoa</taxon>
        <taxon>Chordata</taxon>
        <taxon>Craniata</taxon>
        <taxon>Vertebrata</taxon>
        <taxon>Euteleostomi</taxon>
        <taxon>Amphibia</taxon>
        <taxon>Batrachia</taxon>
        <taxon>Anura</taxon>
        <taxon>Bombinatoridae</taxon>
        <taxon>Bombina</taxon>
    </lineage>
</organism>
<reference key="1">
    <citation type="journal article" date="2005" name="Eur. J. Immunol.">
        <title>Variety of antimicrobial peptides in the Bombina maxima toad and evidence of their rapid diversification.</title>
        <authorList>
            <person name="Lee W.-H."/>
            <person name="Li Y."/>
            <person name="Lai R."/>
            <person name="Li S."/>
            <person name="Zhang Y."/>
            <person name="Wang W."/>
        </authorList>
    </citation>
    <scope>NUCLEOTIDE SEQUENCE [MRNA]</scope>
    <scope>PROTEIN SEQUENCE OF 44-70 AND 124-143</scope>
    <scope>AMIDATION AT ILE-143</scope>
    <scope>MASS SPECTROMETRY</scope>
    <source>
        <tissue>Skin</tissue>
    </source>
</reference>
<reference key="2">
    <citation type="journal article" date="2002" name="Peptides">
        <title>Antimicrobial peptides from skin secretions of Chinese red belly toad Bombina maxima.</title>
        <authorList>
            <person name="Lai R."/>
            <person name="Zheng Y.-T."/>
            <person name="Shen J.-H."/>
            <person name="Liu G.-J."/>
            <person name="Liu H."/>
            <person name="Lee W.-H."/>
            <person name="Tang S.-Z."/>
            <person name="Zhang Y."/>
        </authorList>
    </citation>
    <scope>PROTEIN SEQUENCE OF 44-70</scope>
    <scope>MASS SPECTROMETRY</scope>
    <scope>FUNCTION OF MAXIMIN-3</scope>
</reference>
<comment type="function">
    <text evidence="3">Maximin-3 shows antibacterial activity against both Gram-positive and Gram-negative bacteria. It also shows antimicrobial activity against the fungus C.albicans, but not against A.flavus nor P.uticale. It has little hemolytic activity. It possess a significant cytotoxicity against tumor cell lines. It possess a significant anti-HIV activity. It shows high spermicidal activity.</text>
</comment>
<comment type="function">
    <text evidence="1">Maximin-H9 shows antimicrobial activity against bacteria and against the fungus C.albicans. Shows strong hemolytic activity (By similarity).</text>
</comment>
<comment type="subcellular location">
    <subcellularLocation>
        <location>Secreted</location>
    </subcellularLocation>
</comment>
<comment type="tissue specificity">
    <text>Expressed by the skin glands.</text>
</comment>
<comment type="mass spectrometry">
    <molecule>Maximin-3</molecule>
</comment>
<comment type="similarity">
    <text evidence="5">Belongs to the bombinin family.</text>
</comment>